<sequence length="574" mass="67148">MPRGLELLIAQTILQGFDAQYGRFLEVTSGAQQRFEQADWHAVQQAMKNRIHLYDHHVGLVVEQLRCITNGQSTDAAFLLRVKEHYTRLLPDYPRFEIAESFFNSVYCRLFDHRSLTPERLFIFSSQPERRFRTIPRPLAKDFHPDHGWESLLMRVISDLPLRLRWQNKSRDIHYIVRHLTETLGTDNLAESHLQVANELFYRNKAAWLVGKLITPSGTLPFLLPIHQTDDGELFIDTCLTTTAEASIVFGFARSYFMVYAPLPAALVEWLREILPGKTTAELYMAIGCQKHAKTESYREYLVYLQGCNEQFIEAPGIRGMVMLVFTLPGFDRVFKVIKDRFAPQKEMSAAHVRACYQLVKEHDRVGRMADTQEFENFVLEKRHISPALMALLLQEAAEKITDLGEQIVIRHLYIERRMVPLNIWLEQVEGQQLRDAIEEYGNAIRQLAAANIFPGDMLFKNFGVTRHGRVVFYDYDEICYMTEVNFRDIPLPRYPEDELASEPWYSVSPGDVFPEEFRHWLCADPRIGPLFEEMHADLFRADYWRALQNRIREGHVEDVYAYRRRQRFSVRFV</sequence>
<feature type="chain" id="PRO_1000148338" description="Isocitrate dehydrogenase kinase/phosphatase">
    <location>
        <begin position="1"/>
        <end position="574"/>
    </location>
</feature>
<feature type="active site" evidence="1">
    <location>
        <position position="371"/>
    </location>
</feature>
<feature type="binding site" evidence="1">
    <location>
        <begin position="315"/>
        <end position="321"/>
    </location>
    <ligand>
        <name>ATP</name>
        <dbReference type="ChEBI" id="CHEBI:30616"/>
    </ligand>
</feature>
<feature type="binding site" evidence="1">
    <location>
        <position position="336"/>
    </location>
    <ligand>
        <name>ATP</name>
        <dbReference type="ChEBI" id="CHEBI:30616"/>
    </ligand>
</feature>
<dbReference type="EC" id="2.7.11.5" evidence="1"/>
<dbReference type="EC" id="3.1.3.-" evidence="1"/>
<dbReference type="EMBL" id="FM180568">
    <property type="protein sequence ID" value="CAS11867.1"/>
    <property type="molecule type" value="Genomic_DNA"/>
</dbReference>
<dbReference type="RefSeq" id="WP_001137235.1">
    <property type="nucleotide sequence ID" value="NC_011601.1"/>
</dbReference>
<dbReference type="SMR" id="B7UPG7"/>
<dbReference type="KEGG" id="ecg:E2348C_4319"/>
<dbReference type="HOGENOM" id="CLU_033804_1_1_6"/>
<dbReference type="Proteomes" id="UP000008205">
    <property type="component" value="Chromosome"/>
</dbReference>
<dbReference type="GO" id="GO:0005737">
    <property type="term" value="C:cytoplasm"/>
    <property type="evidence" value="ECO:0007669"/>
    <property type="project" value="UniProtKB-SubCell"/>
</dbReference>
<dbReference type="GO" id="GO:0008772">
    <property type="term" value="F:[isocitrate dehydrogenase (NADP+)] kinase activity"/>
    <property type="evidence" value="ECO:0007669"/>
    <property type="project" value="UniProtKB-UniRule"/>
</dbReference>
<dbReference type="GO" id="GO:0016208">
    <property type="term" value="F:AMP binding"/>
    <property type="evidence" value="ECO:0007669"/>
    <property type="project" value="TreeGrafter"/>
</dbReference>
<dbReference type="GO" id="GO:0005524">
    <property type="term" value="F:ATP binding"/>
    <property type="evidence" value="ECO:0007669"/>
    <property type="project" value="UniProtKB-UniRule"/>
</dbReference>
<dbReference type="GO" id="GO:0004721">
    <property type="term" value="F:phosphoprotein phosphatase activity"/>
    <property type="evidence" value="ECO:0007669"/>
    <property type="project" value="UniProtKB-KW"/>
</dbReference>
<dbReference type="GO" id="GO:0004674">
    <property type="term" value="F:protein serine/threonine kinase activity"/>
    <property type="evidence" value="ECO:0007669"/>
    <property type="project" value="UniProtKB-KW"/>
</dbReference>
<dbReference type="GO" id="GO:0006006">
    <property type="term" value="P:glucose metabolic process"/>
    <property type="evidence" value="ECO:0007669"/>
    <property type="project" value="InterPro"/>
</dbReference>
<dbReference type="GO" id="GO:0006097">
    <property type="term" value="P:glyoxylate cycle"/>
    <property type="evidence" value="ECO:0007669"/>
    <property type="project" value="UniProtKB-UniRule"/>
</dbReference>
<dbReference type="GO" id="GO:0006099">
    <property type="term" value="P:tricarboxylic acid cycle"/>
    <property type="evidence" value="ECO:0007669"/>
    <property type="project" value="UniProtKB-UniRule"/>
</dbReference>
<dbReference type="HAMAP" id="MF_00747">
    <property type="entry name" value="AceK"/>
    <property type="match status" value="1"/>
</dbReference>
<dbReference type="InterPro" id="IPR046855">
    <property type="entry name" value="AceK_kinase"/>
</dbReference>
<dbReference type="InterPro" id="IPR046854">
    <property type="entry name" value="AceK_regulatory"/>
</dbReference>
<dbReference type="InterPro" id="IPR010452">
    <property type="entry name" value="Isocitrate_DH_AceK"/>
</dbReference>
<dbReference type="NCBIfam" id="NF002804">
    <property type="entry name" value="PRK02946.1"/>
    <property type="match status" value="1"/>
</dbReference>
<dbReference type="PANTHER" id="PTHR39559">
    <property type="match status" value="1"/>
</dbReference>
<dbReference type="PANTHER" id="PTHR39559:SF1">
    <property type="entry name" value="ISOCITRATE DEHYDROGENASE KINASE_PHOSPHATASE"/>
    <property type="match status" value="1"/>
</dbReference>
<dbReference type="Pfam" id="PF06315">
    <property type="entry name" value="AceK_kinase"/>
    <property type="match status" value="1"/>
</dbReference>
<dbReference type="Pfam" id="PF20423">
    <property type="entry name" value="AceK_regulatory"/>
    <property type="match status" value="1"/>
</dbReference>
<dbReference type="PIRSF" id="PIRSF000719">
    <property type="entry name" value="AceK"/>
    <property type="match status" value="1"/>
</dbReference>
<comment type="function">
    <text evidence="1">Bifunctional enzyme which can phosphorylate or dephosphorylate isocitrate dehydrogenase (IDH) on a specific serine residue. This is a regulatory mechanism which enables bacteria to bypass the Krebs cycle via the glyoxylate shunt in response to the source of carbon. When bacteria are grown on glucose, IDH is fully active and unphosphorylated, but when grown on acetate or ethanol, the activity of IDH declines drastically concomitant with its phosphorylation.</text>
</comment>
<comment type="catalytic activity">
    <reaction evidence="1">
        <text>L-seryl-[isocitrate dehydrogenase] + ATP = O-phospho-L-seryl-[isocitrate dehydrogenase] + ADP + H(+)</text>
        <dbReference type="Rhea" id="RHEA:43540"/>
        <dbReference type="Rhea" id="RHEA-COMP:10605"/>
        <dbReference type="Rhea" id="RHEA-COMP:10606"/>
        <dbReference type="ChEBI" id="CHEBI:15378"/>
        <dbReference type="ChEBI" id="CHEBI:29999"/>
        <dbReference type="ChEBI" id="CHEBI:30616"/>
        <dbReference type="ChEBI" id="CHEBI:83421"/>
        <dbReference type="ChEBI" id="CHEBI:456216"/>
        <dbReference type="EC" id="2.7.11.5"/>
    </reaction>
</comment>
<comment type="subcellular location">
    <subcellularLocation>
        <location evidence="1">Cytoplasm</location>
    </subcellularLocation>
</comment>
<comment type="similarity">
    <text evidence="1">Belongs to the AceK family.</text>
</comment>
<protein>
    <recommendedName>
        <fullName evidence="1">Isocitrate dehydrogenase kinase/phosphatase</fullName>
        <shortName evidence="1">IDH kinase/phosphatase</shortName>
        <shortName evidence="1">IDHK/P</shortName>
        <ecNumber evidence="1">2.7.11.5</ecNumber>
        <ecNumber evidence="1">3.1.3.-</ecNumber>
    </recommendedName>
</protein>
<proteinExistence type="inferred from homology"/>
<accession>B7UPG7</accession>
<gene>
    <name evidence="1" type="primary">aceK</name>
    <name type="ordered locus">E2348C_4319</name>
</gene>
<reference key="1">
    <citation type="journal article" date="2009" name="J. Bacteriol.">
        <title>Complete genome sequence and comparative genome analysis of enteropathogenic Escherichia coli O127:H6 strain E2348/69.</title>
        <authorList>
            <person name="Iguchi A."/>
            <person name="Thomson N.R."/>
            <person name="Ogura Y."/>
            <person name="Saunders D."/>
            <person name="Ooka T."/>
            <person name="Henderson I.R."/>
            <person name="Harris D."/>
            <person name="Asadulghani M."/>
            <person name="Kurokawa K."/>
            <person name="Dean P."/>
            <person name="Kenny B."/>
            <person name="Quail M.A."/>
            <person name="Thurston S."/>
            <person name="Dougan G."/>
            <person name="Hayashi T."/>
            <person name="Parkhill J."/>
            <person name="Frankel G."/>
        </authorList>
    </citation>
    <scope>NUCLEOTIDE SEQUENCE [LARGE SCALE GENOMIC DNA]</scope>
    <source>
        <strain>E2348/69 / EPEC</strain>
    </source>
</reference>
<keyword id="KW-0067">ATP-binding</keyword>
<keyword id="KW-0963">Cytoplasm</keyword>
<keyword id="KW-0329">Glyoxylate bypass</keyword>
<keyword id="KW-0378">Hydrolase</keyword>
<keyword id="KW-0418">Kinase</keyword>
<keyword id="KW-0547">Nucleotide-binding</keyword>
<keyword id="KW-0904">Protein phosphatase</keyword>
<keyword id="KW-1185">Reference proteome</keyword>
<keyword id="KW-0723">Serine/threonine-protein kinase</keyword>
<keyword id="KW-0808">Transferase</keyword>
<keyword id="KW-0816">Tricarboxylic acid cycle</keyword>
<evidence type="ECO:0000255" key="1">
    <source>
        <dbReference type="HAMAP-Rule" id="MF_00747"/>
    </source>
</evidence>
<organism>
    <name type="scientific">Escherichia coli O127:H6 (strain E2348/69 / EPEC)</name>
    <dbReference type="NCBI Taxonomy" id="574521"/>
    <lineage>
        <taxon>Bacteria</taxon>
        <taxon>Pseudomonadati</taxon>
        <taxon>Pseudomonadota</taxon>
        <taxon>Gammaproteobacteria</taxon>
        <taxon>Enterobacterales</taxon>
        <taxon>Enterobacteriaceae</taxon>
        <taxon>Escherichia</taxon>
    </lineage>
</organism>
<name>ACEK_ECO27</name>